<feature type="signal peptide" evidence="2">
    <location>
        <begin position="1"/>
        <end position="37"/>
    </location>
</feature>
<feature type="chain" id="PRO_0000322976" description="Mammalian ependymin-related protein 1">
    <location>
        <begin position="38"/>
        <end position="224"/>
    </location>
</feature>
<feature type="glycosylation site" description="N-linked (GlcNAc...) asparagine" evidence="2">
    <location>
        <position position="130"/>
    </location>
</feature>
<feature type="glycosylation site" description="N-linked (GlcNAc...) asparagine" evidence="2">
    <location>
        <position position="182"/>
    </location>
</feature>
<feature type="disulfide bond" evidence="1">
    <location>
        <begin position="42"/>
        <end position="172"/>
    </location>
</feature>
<feature type="disulfide bond" evidence="1">
    <location>
        <begin position="88"/>
        <end position="222"/>
    </location>
</feature>
<feature type="disulfide bond" evidence="1">
    <location>
        <begin position="113"/>
        <end position="210"/>
    </location>
</feature>
<feature type="splice variant" id="VSP_031977" description="In isoform 2." evidence="6">
    <location>
        <begin position="91"/>
        <end position="224"/>
    </location>
</feature>
<feature type="sequence conflict" description="In Ref. 3; BAC32624." evidence="7" ref="3">
    <original>W</original>
    <variation>S</variation>
    <location>
        <position position="122"/>
    </location>
</feature>
<feature type="sequence conflict" description="In Ref. 3; BAC30113." evidence="7" ref="3">
    <original>G</original>
    <variation>S</variation>
    <location>
        <position position="197"/>
    </location>
</feature>
<feature type="strand" evidence="8">
    <location>
        <begin position="46"/>
        <end position="56"/>
    </location>
</feature>
<feature type="turn" evidence="8">
    <location>
        <begin position="57"/>
        <end position="60"/>
    </location>
</feature>
<feature type="strand" evidence="8">
    <location>
        <begin position="61"/>
        <end position="70"/>
    </location>
</feature>
<feature type="turn" evidence="8">
    <location>
        <begin position="71"/>
        <end position="74"/>
    </location>
</feature>
<feature type="strand" evidence="8">
    <location>
        <begin position="75"/>
        <end position="80"/>
    </location>
</feature>
<feature type="strand" evidence="8">
    <location>
        <begin position="92"/>
        <end position="97"/>
    </location>
</feature>
<feature type="turn" evidence="8">
    <location>
        <begin position="98"/>
        <end position="101"/>
    </location>
</feature>
<feature type="strand" evidence="8">
    <location>
        <begin position="102"/>
        <end position="107"/>
    </location>
</feature>
<feature type="turn" evidence="8">
    <location>
        <begin position="108"/>
        <end position="110"/>
    </location>
</feature>
<feature type="strand" evidence="8">
    <location>
        <begin position="113"/>
        <end position="117"/>
    </location>
</feature>
<feature type="strand" evidence="8">
    <location>
        <begin position="132"/>
        <end position="141"/>
    </location>
</feature>
<feature type="strand" evidence="8">
    <location>
        <begin position="144"/>
        <end position="152"/>
    </location>
</feature>
<feature type="strand" evidence="8">
    <location>
        <begin position="163"/>
        <end position="168"/>
    </location>
</feature>
<feature type="turn" evidence="8">
    <location>
        <begin position="169"/>
        <end position="171"/>
    </location>
</feature>
<feature type="strand" evidence="8">
    <location>
        <begin position="174"/>
        <end position="181"/>
    </location>
</feature>
<feature type="strand" evidence="8">
    <location>
        <begin position="184"/>
        <end position="197"/>
    </location>
</feature>
<feature type="helix" evidence="8">
    <location>
        <begin position="201"/>
        <end position="204"/>
    </location>
</feature>
<feature type="helix" evidence="8">
    <location>
        <begin position="208"/>
        <end position="211"/>
    </location>
</feature>
<protein>
    <recommendedName>
        <fullName>Mammalian ependymin-related protein 1</fullName>
        <shortName evidence="5">MERP-1</shortName>
    </recommendedName>
</protein>
<evidence type="ECO:0000250" key="1">
    <source>
        <dbReference type="UniProtKB" id="Q9UM22"/>
    </source>
</evidence>
<evidence type="ECO:0000255" key="2"/>
<evidence type="ECO:0000269" key="3">
    <source>
    </source>
</evidence>
<evidence type="ECO:0000269" key="4">
    <source>
    </source>
</evidence>
<evidence type="ECO:0000303" key="5">
    <source>
    </source>
</evidence>
<evidence type="ECO:0000303" key="6">
    <source ref="2"/>
</evidence>
<evidence type="ECO:0000305" key="7"/>
<evidence type="ECO:0007829" key="8">
    <source>
        <dbReference type="PDB" id="6JLA"/>
    </source>
</evidence>
<gene>
    <name type="primary">Epdr1</name>
    <name type="synonym">Epdr2</name>
    <name type="synonym">Merp1</name>
    <name type="synonym">Merp2</name>
</gene>
<keyword id="KW-0002">3D-structure</keyword>
<keyword id="KW-0025">Alternative splicing</keyword>
<keyword id="KW-1015">Disulfide bond</keyword>
<keyword id="KW-0325">Glycoprotein</keyword>
<keyword id="KW-0446">Lipid-binding</keyword>
<keyword id="KW-0458">Lysosome</keyword>
<keyword id="KW-1185">Reference proteome</keyword>
<keyword id="KW-0964">Secreted</keyword>
<keyword id="KW-0732">Signal</keyword>
<comment type="function">
    <text evidence="1">Binds anionic lipids and gangliosides at acidic pH.</text>
</comment>
<comment type="subunit">
    <text evidence="1">Homodimer.</text>
</comment>
<comment type="subcellular location">
    <subcellularLocation>
        <location evidence="4">Lysosome lumen</location>
    </subcellularLocation>
    <subcellularLocation>
        <location evidence="1">Secreted</location>
    </subcellularLocation>
    <text evidence="1">Lysosomal and also secreted.</text>
</comment>
<comment type="alternative products">
    <event type="alternative splicing"/>
    <isoform>
        <id>Q99M71-1</id>
        <name>1</name>
        <sequence type="displayed"/>
    </isoform>
    <isoform>
        <id>Q99M71-2</id>
        <name>2</name>
        <sequence type="described" ref="VSP_031977"/>
    </isoform>
</comment>
<comment type="tissue specificity">
    <text evidence="3 4">Detected in brain, small intestine and in soleus, extensor digitorum longus and white gastrocnemius (at protein level) (PubMed:16954209). Detected in brain and skeletal muscle, and at lower leavels in heart (PubMed:11749721).</text>
</comment>
<comment type="PTM">
    <text evidence="4">N-glycosylated; the glycan contains mannose-6-phosphate moieties.</text>
</comment>
<comment type="similarity">
    <text evidence="7">Belongs to the ependymin family.</text>
</comment>
<reference key="1">
    <citation type="journal article" date="2001" name="DNA Cell Biol.">
        <title>Identification and characterization of a novel family of mammalian ependymin-related proteins (MERPs) in hematopoietic, nonhematopoietic, and malignant tissues.</title>
        <authorList>
            <person name="Apostolopoulos J."/>
            <person name="Sparrow R.L."/>
            <person name="McLeod J.L."/>
            <person name="Collier F.M."/>
            <person name="Darcy P.K."/>
            <person name="Slater H.R."/>
            <person name="Ngu C."/>
            <person name="Gregorio-King C.C."/>
            <person name="Kirkland M.A."/>
        </authorList>
    </citation>
    <scope>NUCLEOTIDE SEQUENCE [GENOMIC DNA / MRNA] (ISOFORM 1)</scope>
    <scope>TISSUE SPECIFICITY</scope>
    <source>
        <strain>C57BL/6J</strain>
    </source>
</reference>
<reference key="2">
    <citation type="submission" date="2006-08" db="EMBL/GenBank/DDBJ databases">
        <title>Characterization of mammalian ependymin proteins.</title>
        <authorList>
            <person name="Gregorio-King C.C."/>
            <person name="Collier F.M."/>
            <person name="Elliott K.L."/>
            <person name="Kirkland M.A."/>
        </authorList>
    </citation>
    <scope>NUCLEOTIDE SEQUENCE [MRNA] (ISOFORM 2)</scope>
</reference>
<reference key="3">
    <citation type="journal article" date="2005" name="Science">
        <title>The transcriptional landscape of the mammalian genome.</title>
        <authorList>
            <person name="Carninci P."/>
            <person name="Kasukawa T."/>
            <person name="Katayama S."/>
            <person name="Gough J."/>
            <person name="Frith M.C."/>
            <person name="Maeda N."/>
            <person name="Oyama R."/>
            <person name="Ravasi T."/>
            <person name="Lenhard B."/>
            <person name="Wells C."/>
            <person name="Kodzius R."/>
            <person name="Shimokawa K."/>
            <person name="Bajic V.B."/>
            <person name="Brenner S.E."/>
            <person name="Batalov S."/>
            <person name="Forrest A.R."/>
            <person name="Zavolan M."/>
            <person name="Davis M.J."/>
            <person name="Wilming L.G."/>
            <person name="Aidinis V."/>
            <person name="Allen J.E."/>
            <person name="Ambesi-Impiombato A."/>
            <person name="Apweiler R."/>
            <person name="Aturaliya R.N."/>
            <person name="Bailey T.L."/>
            <person name="Bansal M."/>
            <person name="Baxter L."/>
            <person name="Beisel K.W."/>
            <person name="Bersano T."/>
            <person name="Bono H."/>
            <person name="Chalk A.M."/>
            <person name="Chiu K.P."/>
            <person name="Choudhary V."/>
            <person name="Christoffels A."/>
            <person name="Clutterbuck D.R."/>
            <person name="Crowe M.L."/>
            <person name="Dalla E."/>
            <person name="Dalrymple B.P."/>
            <person name="de Bono B."/>
            <person name="Della Gatta G."/>
            <person name="di Bernardo D."/>
            <person name="Down T."/>
            <person name="Engstrom P."/>
            <person name="Fagiolini M."/>
            <person name="Faulkner G."/>
            <person name="Fletcher C.F."/>
            <person name="Fukushima T."/>
            <person name="Furuno M."/>
            <person name="Futaki S."/>
            <person name="Gariboldi M."/>
            <person name="Georgii-Hemming P."/>
            <person name="Gingeras T.R."/>
            <person name="Gojobori T."/>
            <person name="Green R.E."/>
            <person name="Gustincich S."/>
            <person name="Harbers M."/>
            <person name="Hayashi Y."/>
            <person name="Hensch T.K."/>
            <person name="Hirokawa N."/>
            <person name="Hill D."/>
            <person name="Huminiecki L."/>
            <person name="Iacono M."/>
            <person name="Ikeo K."/>
            <person name="Iwama A."/>
            <person name="Ishikawa T."/>
            <person name="Jakt M."/>
            <person name="Kanapin A."/>
            <person name="Katoh M."/>
            <person name="Kawasawa Y."/>
            <person name="Kelso J."/>
            <person name="Kitamura H."/>
            <person name="Kitano H."/>
            <person name="Kollias G."/>
            <person name="Krishnan S.P."/>
            <person name="Kruger A."/>
            <person name="Kummerfeld S.K."/>
            <person name="Kurochkin I.V."/>
            <person name="Lareau L.F."/>
            <person name="Lazarevic D."/>
            <person name="Lipovich L."/>
            <person name="Liu J."/>
            <person name="Liuni S."/>
            <person name="McWilliam S."/>
            <person name="Madan Babu M."/>
            <person name="Madera M."/>
            <person name="Marchionni L."/>
            <person name="Matsuda H."/>
            <person name="Matsuzawa S."/>
            <person name="Miki H."/>
            <person name="Mignone F."/>
            <person name="Miyake S."/>
            <person name="Morris K."/>
            <person name="Mottagui-Tabar S."/>
            <person name="Mulder N."/>
            <person name="Nakano N."/>
            <person name="Nakauchi H."/>
            <person name="Ng P."/>
            <person name="Nilsson R."/>
            <person name="Nishiguchi S."/>
            <person name="Nishikawa S."/>
            <person name="Nori F."/>
            <person name="Ohara O."/>
            <person name="Okazaki Y."/>
            <person name="Orlando V."/>
            <person name="Pang K.C."/>
            <person name="Pavan W.J."/>
            <person name="Pavesi G."/>
            <person name="Pesole G."/>
            <person name="Petrovsky N."/>
            <person name="Piazza S."/>
            <person name="Reed J."/>
            <person name="Reid J.F."/>
            <person name="Ring B.Z."/>
            <person name="Ringwald M."/>
            <person name="Rost B."/>
            <person name="Ruan Y."/>
            <person name="Salzberg S.L."/>
            <person name="Sandelin A."/>
            <person name="Schneider C."/>
            <person name="Schoenbach C."/>
            <person name="Sekiguchi K."/>
            <person name="Semple C.A."/>
            <person name="Seno S."/>
            <person name="Sessa L."/>
            <person name="Sheng Y."/>
            <person name="Shibata Y."/>
            <person name="Shimada H."/>
            <person name="Shimada K."/>
            <person name="Silva D."/>
            <person name="Sinclair B."/>
            <person name="Sperling S."/>
            <person name="Stupka E."/>
            <person name="Sugiura K."/>
            <person name="Sultana R."/>
            <person name="Takenaka Y."/>
            <person name="Taki K."/>
            <person name="Tammoja K."/>
            <person name="Tan S.L."/>
            <person name="Tang S."/>
            <person name="Taylor M.S."/>
            <person name="Tegner J."/>
            <person name="Teichmann S.A."/>
            <person name="Ueda H.R."/>
            <person name="van Nimwegen E."/>
            <person name="Verardo R."/>
            <person name="Wei C.L."/>
            <person name="Yagi K."/>
            <person name="Yamanishi H."/>
            <person name="Zabarovsky E."/>
            <person name="Zhu S."/>
            <person name="Zimmer A."/>
            <person name="Hide W."/>
            <person name="Bult C."/>
            <person name="Grimmond S.M."/>
            <person name="Teasdale R.D."/>
            <person name="Liu E.T."/>
            <person name="Brusic V."/>
            <person name="Quackenbush J."/>
            <person name="Wahlestedt C."/>
            <person name="Mattick J.S."/>
            <person name="Hume D.A."/>
            <person name="Kai C."/>
            <person name="Sasaki D."/>
            <person name="Tomaru Y."/>
            <person name="Fukuda S."/>
            <person name="Kanamori-Katayama M."/>
            <person name="Suzuki M."/>
            <person name="Aoki J."/>
            <person name="Arakawa T."/>
            <person name="Iida J."/>
            <person name="Imamura K."/>
            <person name="Itoh M."/>
            <person name="Kato T."/>
            <person name="Kawaji H."/>
            <person name="Kawagashira N."/>
            <person name="Kawashima T."/>
            <person name="Kojima M."/>
            <person name="Kondo S."/>
            <person name="Konno H."/>
            <person name="Nakano K."/>
            <person name="Ninomiya N."/>
            <person name="Nishio T."/>
            <person name="Okada M."/>
            <person name="Plessy C."/>
            <person name="Shibata K."/>
            <person name="Shiraki T."/>
            <person name="Suzuki S."/>
            <person name="Tagami M."/>
            <person name="Waki K."/>
            <person name="Watahiki A."/>
            <person name="Okamura-Oho Y."/>
            <person name="Suzuki H."/>
            <person name="Kawai J."/>
            <person name="Hayashizaki Y."/>
        </authorList>
    </citation>
    <scope>NUCLEOTIDE SEQUENCE [LARGE SCALE MRNA] (ISOFORM 1)</scope>
    <source>
        <strain>C57BL/6J</strain>
        <tissue>Cerebellum</tissue>
        <tissue>Corpora quadrigemina</tissue>
        <tissue>Diencephalon</tissue>
        <tissue>Hypothalamus</tissue>
    </source>
</reference>
<reference key="4">
    <citation type="journal article" date="2004" name="Genome Res.">
        <title>The status, quality, and expansion of the NIH full-length cDNA project: the Mammalian Gene Collection (MGC).</title>
        <authorList>
            <consortium name="The MGC Project Team"/>
        </authorList>
    </citation>
    <scope>NUCLEOTIDE SEQUENCE [LARGE SCALE MRNA] (ISOFORM 1)</scope>
    <source>
        <strain>FVB/N</strain>
        <tissue>Kidney</tissue>
    </source>
</reference>
<reference key="5">
    <citation type="journal article" date="2006" name="J. Biol. Chem.">
        <title>Demonstration of lysosomal localization for the mammalian ependymin-related protein using classical approaches combined with a novel density shift method.</title>
        <authorList>
            <person name="Della Valle M.C."/>
            <person name="Sleat D.E."/>
            <person name="Sohar I."/>
            <person name="Wen T."/>
            <person name="Pintar J.E."/>
            <person name="Jadot M."/>
            <person name="Lobel P."/>
        </authorList>
    </citation>
    <scope>SUBCELLULAR LOCATION</scope>
    <scope>TISSUE SPECIFICITY</scope>
    <scope>GLYCOSYLATION</scope>
</reference>
<reference key="6">
    <citation type="journal article" date="2010" name="Cell">
        <title>A tissue-specific atlas of mouse protein phosphorylation and expression.</title>
        <authorList>
            <person name="Huttlin E.L."/>
            <person name="Jedrychowski M.P."/>
            <person name="Elias J.E."/>
            <person name="Goswami T."/>
            <person name="Rad R."/>
            <person name="Beausoleil S.A."/>
            <person name="Villen J."/>
            <person name="Haas W."/>
            <person name="Sowa M.E."/>
            <person name="Gygi S.P."/>
        </authorList>
    </citation>
    <scope>IDENTIFICATION BY MASS SPECTROMETRY [LARGE SCALE ANALYSIS]</scope>
    <source>
        <tissue>Brain</tissue>
        <tissue>Heart</tissue>
        <tissue>Liver</tissue>
        <tissue>Lung</tissue>
        <tissue>Spleen</tissue>
    </source>
</reference>
<name>EPDR1_MOUSE</name>
<proteinExistence type="evidence at protein level"/>
<organism>
    <name type="scientific">Mus musculus</name>
    <name type="common">Mouse</name>
    <dbReference type="NCBI Taxonomy" id="10090"/>
    <lineage>
        <taxon>Eukaryota</taxon>
        <taxon>Metazoa</taxon>
        <taxon>Chordata</taxon>
        <taxon>Craniata</taxon>
        <taxon>Vertebrata</taxon>
        <taxon>Euteleostomi</taxon>
        <taxon>Mammalia</taxon>
        <taxon>Eutheria</taxon>
        <taxon>Euarchontoglires</taxon>
        <taxon>Glires</taxon>
        <taxon>Rodentia</taxon>
        <taxon>Myomorpha</taxon>
        <taxon>Muroidea</taxon>
        <taxon>Muridae</taxon>
        <taxon>Murinae</taxon>
        <taxon>Mus</taxon>
        <taxon>Mus</taxon>
    </lineage>
</organism>
<accession>Q99M71</accession>
<accession>Q06BK9</accession>
<accession>Q8BQY1</accession>
<accession>Q8CAI2</accession>
<dbReference type="EMBL" id="AY028709">
    <property type="protein sequence ID" value="AAK29146.1"/>
    <property type="molecule type" value="Genomic_DNA"/>
</dbReference>
<dbReference type="EMBL" id="AF353717">
    <property type="protein sequence ID" value="AAK51799.1"/>
    <property type="molecule type" value="mRNA"/>
</dbReference>
<dbReference type="EMBL" id="DQ914440">
    <property type="protein sequence ID" value="ABI84107.1"/>
    <property type="molecule type" value="mRNA"/>
</dbReference>
<dbReference type="EMBL" id="AK034083">
    <property type="protein sequence ID" value="BAC28576.1"/>
    <property type="molecule type" value="mRNA"/>
</dbReference>
<dbReference type="EMBL" id="AK038733">
    <property type="protein sequence ID" value="BAC30113.1"/>
    <property type="molecule type" value="mRNA"/>
</dbReference>
<dbReference type="EMBL" id="AK046185">
    <property type="protein sequence ID" value="BAC32624.1"/>
    <property type="molecule type" value="mRNA"/>
</dbReference>
<dbReference type="EMBL" id="AK160413">
    <property type="protein sequence ID" value="BAE35778.1"/>
    <property type="molecule type" value="mRNA"/>
</dbReference>
<dbReference type="EMBL" id="BC014708">
    <property type="protein sequence ID" value="AAH14708.1"/>
    <property type="molecule type" value="mRNA"/>
</dbReference>
<dbReference type="CCDS" id="CCDS26260.1">
    <molecule id="Q99M71-1"/>
</dbReference>
<dbReference type="RefSeq" id="NP_598826.3">
    <molecule id="Q99M71-1"/>
    <property type="nucleotide sequence ID" value="NM_134065.4"/>
</dbReference>
<dbReference type="PDB" id="6JLA">
    <property type="method" value="X-ray"/>
    <property type="resolution" value="2.40 A"/>
    <property type="chains" value="A/B/C/D=38-224"/>
</dbReference>
<dbReference type="PDBsum" id="6JLA"/>
<dbReference type="SMR" id="Q99M71"/>
<dbReference type="BioGRID" id="222817">
    <property type="interactions" value="10"/>
</dbReference>
<dbReference type="FunCoup" id="Q99M71">
    <property type="interactions" value="118"/>
</dbReference>
<dbReference type="STRING" id="10090.ENSMUSP00000002885"/>
<dbReference type="GlyConnect" id="2502">
    <property type="glycosylation" value="8 N-Linked glycans (1 site)"/>
</dbReference>
<dbReference type="GlyCosmos" id="Q99M71">
    <property type="glycosylation" value="2 sites, 8 glycans"/>
</dbReference>
<dbReference type="GlyGen" id="Q99M71">
    <property type="glycosylation" value="2 sites, 8 N-linked glycans (1 site)"/>
</dbReference>
<dbReference type="iPTMnet" id="Q99M71"/>
<dbReference type="PhosphoSitePlus" id="Q99M71"/>
<dbReference type="SwissPalm" id="Q99M71"/>
<dbReference type="jPOST" id="Q99M71"/>
<dbReference type="PaxDb" id="10090-ENSMUSP00000002885"/>
<dbReference type="PeptideAtlas" id="Q99M71"/>
<dbReference type="ProteomicsDB" id="275932">
    <molecule id="Q99M71-1"/>
</dbReference>
<dbReference type="ProteomicsDB" id="275933">
    <molecule id="Q99M71-2"/>
</dbReference>
<dbReference type="Pumba" id="Q99M71"/>
<dbReference type="Antibodypedia" id="34976">
    <property type="antibodies" value="181 antibodies from 20 providers"/>
</dbReference>
<dbReference type="DNASU" id="105298"/>
<dbReference type="Ensembl" id="ENSMUST00000002885.8">
    <molecule id="Q99M71-1"/>
    <property type="protein sequence ID" value="ENSMUSP00000002885.7"/>
    <property type="gene ID" value="ENSMUSG00000002808.8"/>
</dbReference>
<dbReference type="Ensembl" id="ENSMUST00000221014.2">
    <molecule id="Q99M71-2"/>
    <property type="protein sequence ID" value="ENSMUSP00000152111.2"/>
    <property type="gene ID" value="ENSMUSG00000002808.8"/>
</dbReference>
<dbReference type="GeneID" id="105298"/>
<dbReference type="KEGG" id="mmu:105298"/>
<dbReference type="UCSC" id="uc007ppe.2">
    <molecule id="Q99M71-1"/>
    <property type="organism name" value="mouse"/>
</dbReference>
<dbReference type="AGR" id="MGI:2145369"/>
<dbReference type="CTD" id="54749"/>
<dbReference type="MGI" id="MGI:2145369">
    <property type="gene designation" value="Epdr1"/>
</dbReference>
<dbReference type="VEuPathDB" id="HostDB:ENSMUSG00000002808"/>
<dbReference type="eggNOG" id="ENOG502QQ8T">
    <property type="taxonomic scope" value="Eukaryota"/>
</dbReference>
<dbReference type="GeneTree" id="ENSGT00940000161910"/>
<dbReference type="HOGENOM" id="CLU_097673_0_0_1"/>
<dbReference type="InParanoid" id="Q99M71"/>
<dbReference type="OMA" id="TMKDCYP"/>
<dbReference type="OrthoDB" id="6084362at2759"/>
<dbReference type="PhylomeDB" id="Q99M71"/>
<dbReference type="TreeFam" id="TF328581"/>
<dbReference type="BioGRID-ORCS" id="105298">
    <property type="hits" value="0 hits in 75 CRISPR screens"/>
</dbReference>
<dbReference type="CD-CODE" id="CE726F99">
    <property type="entry name" value="Postsynaptic density"/>
</dbReference>
<dbReference type="ChiTaRS" id="Epdr1">
    <property type="organism name" value="mouse"/>
</dbReference>
<dbReference type="PRO" id="PR:Q99M71"/>
<dbReference type="Proteomes" id="UP000000589">
    <property type="component" value="Chromosome 13"/>
</dbReference>
<dbReference type="RNAct" id="Q99M71">
    <property type="molecule type" value="protein"/>
</dbReference>
<dbReference type="Bgee" id="ENSMUSG00000002808">
    <property type="expression patterns" value="Expressed in sciatic nerve and 238 other cell types or tissues"/>
</dbReference>
<dbReference type="ExpressionAtlas" id="Q99M71">
    <property type="expression patterns" value="baseline and differential"/>
</dbReference>
<dbReference type="GO" id="GO:0005576">
    <property type="term" value="C:extracellular region"/>
    <property type="evidence" value="ECO:0007669"/>
    <property type="project" value="UniProtKB-SubCell"/>
</dbReference>
<dbReference type="GO" id="GO:0043202">
    <property type="term" value="C:lysosomal lumen"/>
    <property type="evidence" value="ECO:0007669"/>
    <property type="project" value="UniProtKB-SubCell"/>
</dbReference>
<dbReference type="GO" id="GO:0005764">
    <property type="term" value="C:lysosome"/>
    <property type="evidence" value="ECO:0000314"/>
    <property type="project" value="MGI"/>
</dbReference>
<dbReference type="GO" id="GO:0005509">
    <property type="term" value="F:calcium ion binding"/>
    <property type="evidence" value="ECO:0007669"/>
    <property type="project" value="InterPro"/>
</dbReference>
<dbReference type="GO" id="GO:1905573">
    <property type="term" value="F:ganglioside GM1 binding"/>
    <property type="evidence" value="ECO:0007669"/>
    <property type="project" value="Ensembl"/>
</dbReference>
<dbReference type="GO" id="GO:0042802">
    <property type="term" value="F:identical protein binding"/>
    <property type="evidence" value="ECO:0007669"/>
    <property type="project" value="Ensembl"/>
</dbReference>
<dbReference type="GO" id="GO:0005543">
    <property type="term" value="F:phospholipid binding"/>
    <property type="evidence" value="ECO:0007669"/>
    <property type="project" value="Ensembl"/>
</dbReference>
<dbReference type="GO" id="GO:0007160">
    <property type="term" value="P:cell-matrix adhesion"/>
    <property type="evidence" value="ECO:0007669"/>
    <property type="project" value="InterPro"/>
</dbReference>
<dbReference type="GO" id="GO:1990764">
    <property type="term" value="P:myofibroblast contraction"/>
    <property type="evidence" value="ECO:0007669"/>
    <property type="project" value="Ensembl"/>
</dbReference>
<dbReference type="InterPro" id="IPR001299">
    <property type="entry name" value="Ependymin"/>
</dbReference>
<dbReference type="PANTHER" id="PTHR10697">
    <property type="entry name" value="MAMMALIAN EPENDYMIN-RELATED PROTEIN 1"/>
    <property type="match status" value="1"/>
</dbReference>
<dbReference type="PANTHER" id="PTHR10697:SF1">
    <property type="entry name" value="MAMMALIAN EPENDYMIN-RELATED PROTEIN 1"/>
    <property type="match status" value="1"/>
</dbReference>
<dbReference type="Pfam" id="PF00811">
    <property type="entry name" value="Ependymin"/>
    <property type="match status" value="1"/>
</dbReference>
<dbReference type="PRINTS" id="PR00317">
    <property type="entry name" value="EPENDYMIN"/>
</dbReference>
<dbReference type="SMART" id="SM00026">
    <property type="entry name" value="EPEND"/>
    <property type="match status" value="1"/>
</dbReference>
<sequence length="224" mass="25485">MPARAPRRLVQGPRGTWLLGSLWVWVLCGLGMAGSLGTPQPCQAPQQWEGRQVLYQQSSGHNNRALVSYDGLNQRVRVLDERKALIPCKRLFEYILLYKEGVMFQIEQATKQCAKIPLVESWDPLDIPQNSTFEDQYSIGGPQEQILVQEWSDRRTARSYETWIGVYTAKDCYPVQETFIRNYTVVMSTRFFDVQLGIKDPSVFTPPSTCQAAQPEKMSDGCSL</sequence>